<sequence>MPGVIMDNATTGRPGHAPDTQTPSNGDNLRNGSFHINGAAKGDKDHDPDKESYAGKPRIDGHRALPEIPHITQGFFPFSTLVNRSVQQCWNELSDLITELAAIHVSPHSSVPLLPVNGKSPGNQSPENVQKKLRILDFAHAKRAEFIKLLVLSQWSRRARDVSKLIDLQNFIRARHQAFVDALQRVGEMKRDLVQAQVANPDLQTALEILSKGRLESLADLGYKSSKLLTARGALRRLHKINRIISARLALHDLIPHPFRTYRVHDGRVTFVVRGEFELDLSIGAESELSQFFFVDIRFLYSPSSNIPKGRMSNEIDAKINEKLRDSGLTGCFNFLHGLVLTNKIHILFKQAIELAKGLWSETLRVELLHRTLVIQYWTLKPGPKSWIEIGVKSGNGDADSQGLGVPCLGLRWMRDGQEVNSRDIEFDPEDLSMECLLRSVIALHISYLLSSAYGILSEYSLFSSGTLSSHAILNVTEPGECQLSVQLTGSRHLRVSIEPMSGAVILSATPGLLERFESDASLDRSTIDDLVARVSRLRCIAAIEELESNVRILGFETVSPKGLRNDIRKVFPANVLRFSLFWHPLWERNWVVAATSSITSDNWWVVRLRRSSEVATDFSVSDTSVPLCSGHSMSDTFLATSHQTRSSSFPDLGYCLSGMVAIYANVSYLSDLHSVEFHPPLCALKVESDLQIPDIFIRYQVSNLPRALQLVLPAGLKRKNLLKDTVRLAFHGIDRHKNSAIFVAYGNLVGPWTDLCTLISKSDSSLVFKQGGSGFALRLLAPAGRPVIVQLFKSLQTLECTLSILDFLRQRRLTPQSLSLTHIAFAYGPGRDLSATIEMGLSEVPSSAELDPVRVLARTDPLLCLTLGIRFKHPNPHRRVQGSLAAILNHASNEAGLDFVTEVLSFTLPLMRALEQITSNASRQEPFRLQVIVRNAYTFLLHYTYQGFRFQLTTRQHSGQLTWVLRELSSPEAGPGHDQFKARLRGTLYHSKGNGWKGLGNGVVADAEGVSNVIRALDGCFTGAQHNTWLPRETKSEQDYSTQPAPENQSQTGAPSQAGMANDTKMTANFVNDKSLQRNPVVSNAADVITID</sequence>
<gene>
    <name type="primary">rgr1</name>
    <name type="synonym">med14</name>
    <name type="ORF">AFUA_2G06180</name>
</gene>
<evidence type="ECO:0000250" key="1"/>
<evidence type="ECO:0000256" key="2">
    <source>
        <dbReference type="SAM" id="MobiDB-lite"/>
    </source>
</evidence>
<evidence type="ECO:0000305" key="3"/>
<organism>
    <name type="scientific">Aspergillus fumigatus (strain ATCC MYA-4609 / CBS 101355 / FGSC A1100 / Af293)</name>
    <name type="common">Neosartorya fumigata</name>
    <dbReference type="NCBI Taxonomy" id="330879"/>
    <lineage>
        <taxon>Eukaryota</taxon>
        <taxon>Fungi</taxon>
        <taxon>Dikarya</taxon>
        <taxon>Ascomycota</taxon>
        <taxon>Pezizomycotina</taxon>
        <taxon>Eurotiomycetes</taxon>
        <taxon>Eurotiomycetidae</taxon>
        <taxon>Eurotiales</taxon>
        <taxon>Aspergillaceae</taxon>
        <taxon>Aspergillus</taxon>
        <taxon>Aspergillus subgen. Fumigati</taxon>
    </lineage>
</organism>
<reference key="1">
    <citation type="journal article" date="2005" name="Nature">
        <title>Genomic sequence of the pathogenic and allergenic filamentous fungus Aspergillus fumigatus.</title>
        <authorList>
            <person name="Nierman W.C."/>
            <person name="Pain A."/>
            <person name="Anderson M.J."/>
            <person name="Wortman J.R."/>
            <person name="Kim H.S."/>
            <person name="Arroyo J."/>
            <person name="Berriman M."/>
            <person name="Abe K."/>
            <person name="Archer D.B."/>
            <person name="Bermejo C."/>
            <person name="Bennett J.W."/>
            <person name="Bowyer P."/>
            <person name="Chen D."/>
            <person name="Collins M."/>
            <person name="Coulsen R."/>
            <person name="Davies R."/>
            <person name="Dyer P.S."/>
            <person name="Farman M.L."/>
            <person name="Fedorova N."/>
            <person name="Fedorova N.D."/>
            <person name="Feldblyum T.V."/>
            <person name="Fischer R."/>
            <person name="Fosker N."/>
            <person name="Fraser A."/>
            <person name="Garcia J.L."/>
            <person name="Garcia M.J."/>
            <person name="Goble A."/>
            <person name="Goldman G.H."/>
            <person name="Gomi K."/>
            <person name="Griffith-Jones S."/>
            <person name="Gwilliam R."/>
            <person name="Haas B.J."/>
            <person name="Haas H."/>
            <person name="Harris D.E."/>
            <person name="Horiuchi H."/>
            <person name="Huang J."/>
            <person name="Humphray S."/>
            <person name="Jimenez J."/>
            <person name="Keller N."/>
            <person name="Khouri H."/>
            <person name="Kitamoto K."/>
            <person name="Kobayashi T."/>
            <person name="Konzack S."/>
            <person name="Kulkarni R."/>
            <person name="Kumagai T."/>
            <person name="Lafton A."/>
            <person name="Latge J.-P."/>
            <person name="Li W."/>
            <person name="Lord A."/>
            <person name="Lu C."/>
            <person name="Majoros W.H."/>
            <person name="May G.S."/>
            <person name="Miller B.L."/>
            <person name="Mohamoud Y."/>
            <person name="Molina M."/>
            <person name="Monod M."/>
            <person name="Mouyna I."/>
            <person name="Mulligan S."/>
            <person name="Murphy L.D."/>
            <person name="O'Neil S."/>
            <person name="Paulsen I."/>
            <person name="Penalva M.A."/>
            <person name="Pertea M."/>
            <person name="Price C."/>
            <person name="Pritchard B.L."/>
            <person name="Quail M.A."/>
            <person name="Rabbinowitsch E."/>
            <person name="Rawlins N."/>
            <person name="Rajandream M.A."/>
            <person name="Reichard U."/>
            <person name="Renauld H."/>
            <person name="Robson G.D."/>
            <person name="Rodriguez de Cordoba S."/>
            <person name="Rodriguez-Pena J.M."/>
            <person name="Ronning C.M."/>
            <person name="Rutter S."/>
            <person name="Salzberg S.L."/>
            <person name="Sanchez M."/>
            <person name="Sanchez-Ferrero J.C."/>
            <person name="Saunders D."/>
            <person name="Seeger K."/>
            <person name="Squares R."/>
            <person name="Squares S."/>
            <person name="Takeuchi M."/>
            <person name="Tekaia F."/>
            <person name="Turner G."/>
            <person name="Vazquez de Aldana C.R."/>
            <person name="Weidman J."/>
            <person name="White O."/>
            <person name="Woodward J.R."/>
            <person name="Yu J.-H."/>
            <person name="Fraser C.M."/>
            <person name="Galagan J.E."/>
            <person name="Asai K."/>
            <person name="Machida M."/>
            <person name="Hall N."/>
            <person name="Barrell B.G."/>
            <person name="Denning D.W."/>
        </authorList>
    </citation>
    <scope>NUCLEOTIDE SEQUENCE [LARGE SCALE GENOMIC DNA]</scope>
    <source>
        <strain>ATCC MYA-4609 / CBS 101355 / FGSC A1100 / Af293</strain>
    </source>
</reference>
<keyword id="KW-0010">Activator</keyword>
<keyword id="KW-0539">Nucleus</keyword>
<keyword id="KW-1185">Reference proteome</keyword>
<keyword id="KW-0804">Transcription</keyword>
<keyword id="KW-0805">Transcription regulation</keyword>
<feature type="chain" id="PRO_0000304593" description="Mediator of RNA polymerase II transcription subunit 14">
    <location>
        <begin position="1"/>
        <end position="1093"/>
    </location>
</feature>
<feature type="region of interest" description="Disordered" evidence="2">
    <location>
        <begin position="1"/>
        <end position="62"/>
    </location>
</feature>
<feature type="region of interest" description="Disordered" evidence="2">
    <location>
        <begin position="1034"/>
        <end position="1065"/>
    </location>
</feature>
<feature type="compositionally biased region" description="Polar residues" evidence="2">
    <location>
        <begin position="19"/>
        <end position="31"/>
    </location>
</feature>
<feature type="compositionally biased region" description="Basic and acidic residues" evidence="2">
    <location>
        <begin position="41"/>
        <end position="62"/>
    </location>
</feature>
<feature type="compositionally biased region" description="Polar residues" evidence="2">
    <location>
        <begin position="1040"/>
        <end position="1056"/>
    </location>
</feature>
<dbReference type="EMBL" id="AAHF01000008">
    <property type="protein sequence ID" value="EAL87709.1"/>
    <property type="molecule type" value="Genomic_DNA"/>
</dbReference>
<dbReference type="RefSeq" id="XP_749747.1">
    <property type="nucleotide sequence ID" value="XM_744654.1"/>
</dbReference>
<dbReference type="STRING" id="330879.Q4WH96"/>
<dbReference type="EnsemblFungi" id="EAL87709">
    <property type="protein sequence ID" value="EAL87709"/>
    <property type="gene ID" value="AFUA_2G06180"/>
</dbReference>
<dbReference type="GeneID" id="3506639"/>
<dbReference type="KEGG" id="afm:AFUA_2G06180"/>
<dbReference type="VEuPathDB" id="FungiDB:Afu2g06180"/>
<dbReference type="eggNOG" id="KOG1875">
    <property type="taxonomic scope" value="Eukaryota"/>
</dbReference>
<dbReference type="HOGENOM" id="CLU_003573_1_1_1"/>
<dbReference type="InParanoid" id="Q4WH96"/>
<dbReference type="OMA" id="ITQGYIP"/>
<dbReference type="OrthoDB" id="205099at2759"/>
<dbReference type="Proteomes" id="UP000002530">
    <property type="component" value="Chromosome 2"/>
</dbReference>
<dbReference type="GO" id="GO:0070847">
    <property type="term" value="C:core mediator complex"/>
    <property type="evidence" value="ECO:0000318"/>
    <property type="project" value="GO_Central"/>
</dbReference>
<dbReference type="GO" id="GO:0016592">
    <property type="term" value="C:mediator complex"/>
    <property type="evidence" value="ECO:0000318"/>
    <property type="project" value="GO_Central"/>
</dbReference>
<dbReference type="GO" id="GO:0003712">
    <property type="term" value="F:transcription coregulator activity"/>
    <property type="evidence" value="ECO:0000318"/>
    <property type="project" value="GO_Central"/>
</dbReference>
<dbReference type="GO" id="GO:0006357">
    <property type="term" value="P:regulation of transcription by RNA polymerase II"/>
    <property type="evidence" value="ECO:0000318"/>
    <property type="project" value="GO_Central"/>
</dbReference>
<dbReference type="InterPro" id="IPR055122">
    <property type="entry name" value="Med14_N"/>
</dbReference>
<dbReference type="InterPro" id="IPR013947">
    <property type="entry name" value="Mediator_Med14"/>
</dbReference>
<dbReference type="PANTHER" id="PTHR12809">
    <property type="entry name" value="MEDIATOR COMPLEX SUBUNIT"/>
    <property type="match status" value="1"/>
</dbReference>
<dbReference type="PANTHER" id="PTHR12809:SF2">
    <property type="entry name" value="MEDIATOR OF RNA POLYMERASE II TRANSCRIPTION SUBUNIT 14"/>
    <property type="match status" value="1"/>
</dbReference>
<dbReference type="Pfam" id="PF08638">
    <property type="entry name" value="Med14"/>
    <property type="match status" value="1"/>
</dbReference>
<accession>Q4WH96</accession>
<protein>
    <recommendedName>
        <fullName>Mediator of RNA polymerase II transcription subunit 14</fullName>
    </recommendedName>
    <alternativeName>
        <fullName>Mediator complex subunit 14</fullName>
    </alternativeName>
</protein>
<proteinExistence type="inferred from homology"/>
<comment type="function">
    <text evidence="1">Component of the Mediator complex, a coactivator involved in the regulated transcription of nearly all RNA polymerase II-dependent genes. Mediator functions as a bridge to convey information from gene-specific regulatory proteins to the basal RNA polymerase II transcription machinery. Mediator is recruited to promoters by direct interactions with regulatory proteins and serves as a scaffold for the assembly of a functional preinitiation complex with RNA polymerase II and the general transcription factors (By similarity).</text>
</comment>
<comment type="subunit">
    <text evidence="1">Component of the Mediator complex.</text>
</comment>
<comment type="subcellular location">
    <subcellularLocation>
        <location evidence="3">Nucleus</location>
    </subcellularLocation>
</comment>
<comment type="similarity">
    <text evidence="3">Belongs to the Mediator complex subunit 14 family.</text>
</comment>
<name>MED14_ASPFU</name>